<organism>
    <name type="scientific">Arabidopsis thaliana</name>
    <name type="common">Mouse-ear cress</name>
    <dbReference type="NCBI Taxonomy" id="3702"/>
    <lineage>
        <taxon>Eukaryota</taxon>
        <taxon>Viridiplantae</taxon>
        <taxon>Streptophyta</taxon>
        <taxon>Embryophyta</taxon>
        <taxon>Tracheophyta</taxon>
        <taxon>Spermatophyta</taxon>
        <taxon>Magnoliopsida</taxon>
        <taxon>eudicotyledons</taxon>
        <taxon>Gunneridae</taxon>
        <taxon>Pentapetalae</taxon>
        <taxon>rosids</taxon>
        <taxon>malvids</taxon>
        <taxon>Brassicales</taxon>
        <taxon>Brassicaceae</taxon>
        <taxon>Camelineae</taxon>
        <taxon>Arabidopsis</taxon>
    </lineage>
</organism>
<feature type="chain" id="PRO_0000412586" description="Dol-P-Man:Man(7)GlcNAc(2)-PP-Dol alpha-1,6-mannosyltransferase">
    <location>
        <begin position="1"/>
        <end position="497"/>
    </location>
</feature>
<feature type="transmembrane region" description="Helical" evidence="1">
    <location>
        <begin position="10"/>
        <end position="30"/>
    </location>
</feature>
<feature type="transmembrane region" description="Helical" evidence="1">
    <location>
        <begin position="71"/>
        <end position="91"/>
    </location>
</feature>
<feature type="transmembrane region" description="Helical" evidence="1">
    <location>
        <begin position="92"/>
        <end position="112"/>
    </location>
</feature>
<feature type="transmembrane region" description="Helical" evidence="1">
    <location>
        <begin position="125"/>
        <end position="145"/>
    </location>
</feature>
<feature type="transmembrane region" description="Helical" evidence="1">
    <location>
        <begin position="154"/>
        <end position="174"/>
    </location>
</feature>
<feature type="transmembrane region" description="Helical" evidence="1">
    <location>
        <begin position="178"/>
        <end position="198"/>
    </location>
</feature>
<feature type="transmembrane region" description="Helical" evidence="1">
    <location>
        <begin position="215"/>
        <end position="235"/>
    </location>
</feature>
<feature type="transmembrane region" description="Helical" evidence="1">
    <location>
        <begin position="263"/>
        <end position="285"/>
    </location>
</feature>
<feature type="transmembrane region" description="Helical" evidence="1">
    <location>
        <begin position="292"/>
        <end position="312"/>
    </location>
</feature>
<feature type="transmembrane region" description="Helical" evidence="1">
    <location>
        <begin position="316"/>
        <end position="336"/>
    </location>
</feature>
<feature type="transmembrane region" description="Helical" evidence="1">
    <location>
        <begin position="346"/>
        <end position="366"/>
    </location>
</feature>
<feature type="glycosylation site" description="N-linked (GlcNAc...) asparagine" evidence="1">
    <location>
        <position position="253"/>
    </location>
</feature>
<feature type="glycosylation site" description="N-linked (GlcNAc...) asparagine" evidence="1">
    <location>
        <position position="435"/>
    </location>
</feature>
<feature type="splice variant" id="VSP_041715" description="In isoform 3." evidence="4">
    <location>
        <begin position="1"/>
        <end position="322"/>
    </location>
</feature>
<feature type="splice variant" id="VSP_041716" description="In isoform 2, isoform 4 and isoform 6." evidence="3">
    <location>
        <begin position="1"/>
        <end position="44"/>
    </location>
</feature>
<feature type="splice variant" id="VSP_041717" description="In isoform 4 and isoform 5." evidence="3">
    <location>
        <begin position="71"/>
        <end position="74"/>
    </location>
</feature>
<feature type="splice variant" id="VSP_041718" description="In isoform 2." evidence="3">
    <location>
        <begin position="260"/>
        <end position="380"/>
    </location>
</feature>
<feature type="mutagenesis site" description="In ebs4-3; incomplete assembly of glycans and compromised endoplasmic reticulum-associated degradation (ERAD) of defective proteins." evidence="2">
    <original>E</original>
    <variation>K</variation>
    <location>
        <position position="38"/>
    </location>
</feature>
<feature type="mutagenesis site" description="In ebs4-2; incomplete assembly of glycans and compromised endoplasmic reticulum-associated degradation (ERAD) of defective proteins." evidence="2">
    <original>S</original>
    <variation>P</variation>
    <location>
        <position position="307"/>
    </location>
</feature>
<proteinExistence type="evidence at protein level"/>
<comment type="function">
    <text evidence="2">Mannosyltransferase that operates in the biosynthetic pathway of dolichol-linked oligosaccharides, the glycan precursors employed in protein asparagine (N)-glycosylation. The assembly of dolichol-linked oligosaccharides begins on the cytosolic side of the endoplasmic reticulum membrane and finishes in its lumen. The sequential addition of sugars to dolichol pyrophosphate produces dolichol-linked oligosaccharides containing fourteen sugars, including two GlcNAcs, nine mannoses and three glucoses. Once assembled, the oligosaccharide is transferred from the lipid to nascent proteins by oligosaccharyltransferases. In the lumen of the endoplasmic reticulum, adds the eighth mannose residue in an alpha-1,6 linkage onto Man(7)GlcNAc(2)-PP-dolichol to produce Man(8)GlcNAc(2)-PP-dolichol.</text>
</comment>
<comment type="catalytic activity">
    <reaction evidence="2">
        <text>an alpha-D-Man-(1-&gt;2)-alpha-D-Man-(1-&gt;2)-alpha-D-Man-(1-&gt;3)-[alpha-D-Man-(1-&gt;2)-alpha-D-Man-(1-&gt;3)-alpha-D-Man-(1-&gt;6)]-beta-D-Man-(1-&gt;4)-beta-D-GlcNAc-(1-&gt;4)-alpha-D-GlcNAc-diphospho-di-trans,poly-cis-dolichol + a di-trans,poly-cis-dolichyl beta-D-mannosyl phosphate = an alpha-D-Man-(1-&gt;2)-alpha-D-Man-(1-&gt;2)-alpha-D-Man-(1-&gt;3)-[alpha-D-Man-(1-&gt;2)-alpha-D-Man-(1-&gt;3)-[alpha-D-Man-(1-&gt;6)]-alpha-D-Man-(1-&gt;6)]-beta-D-Man-(1-&gt;4)-beta-D-GlcNAc-(1-&gt;4)-alpha-D-GlcNAc-diphospho-di-trans,poly-cis-dolichol + a di-trans,poly-cis-dolichyl phosphate + H(+)</text>
        <dbReference type="Rhea" id="RHEA:29535"/>
        <dbReference type="Rhea" id="RHEA-COMP:19498"/>
        <dbReference type="Rhea" id="RHEA-COMP:19501"/>
        <dbReference type="Rhea" id="RHEA-COMP:19518"/>
        <dbReference type="Rhea" id="RHEA-COMP:19519"/>
        <dbReference type="ChEBI" id="CHEBI:15378"/>
        <dbReference type="ChEBI" id="CHEBI:57683"/>
        <dbReference type="ChEBI" id="CHEBI:58211"/>
        <dbReference type="ChEBI" id="CHEBI:132517"/>
        <dbReference type="ChEBI" id="CHEBI:132519"/>
        <dbReference type="EC" id="2.4.1.260"/>
    </reaction>
    <physiologicalReaction direction="left-to-right" evidence="6">
        <dbReference type="Rhea" id="RHEA:29536"/>
    </physiologicalReaction>
</comment>
<comment type="pathway">
    <text evidence="6">Protein modification; protein glycosylation.</text>
</comment>
<comment type="subcellular location">
    <subcellularLocation>
        <location evidence="6">Endoplasmic reticulum membrane</location>
        <topology evidence="1">Multi-pass membrane protein</topology>
    </subcellularLocation>
</comment>
<comment type="alternative products">
    <event type="alternative splicing"/>
    <isoform>
        <id>A8MR93-1</id>
        <name>1</name>
        <sequence type="displayed"/>
    </isoform>
    <isoform>
        <id>A8MR93-2</id>
        <name>2</name>
        <sequence type="described" ref="VSP_041716 VSP_041718"/>
    </isoform>
    <isoform>
        <id>A8MR93-3</id>
        <name>3</name>
        <sequence type="described" ref="VSP_041715"/>
    </isoform>
    <isoform>
        <id>A8MR93-4</id>
        <name>4</name>
        <sequence type="described" ref="VSP_041716 VSP_041717"/>
    </isoform>
    <isoform>
        <id>A8MR93-5</id>
        <name>5</name>
        <sequence type="described" ref="VSP_041717"/>
    </isoform>
    <isoform>
        <id>A8MR93-6</id>
        <name>6</name>
        <sequence type="described" ref="VSP_041716"/>
    </isoform>
</comment>
<comment type="miscellaneous">
    <text>In the absence of ALG12 activity, the N-glycans transferred to proteins are aberrant, indicating that the oligosaccharyltransferase (OST) complex is substrate-tolerant.</text>
</comment>
<comment type="similarity">
    <text evidence="5">Belongs to the glycosyltransferase 22 family.</text>
</comment>
<reference key="1">
    <citation type="journal article" date="2000" name="Nature">
        <title>Sequence and analysis of chromosome 1 of the plant Arabidopsis thaliana.</title>
        <authorList>
            <person name="Theologis A."/>
            <person name="Ecker J.R."/>
            <person name="Palm C.J."/>
            <person name="Federspiel N.A."/>
            <person name="Kaul S."/>
            <person name="White O."/>
            <person name="Alonso J."/>
            <person name="Altafi H."/>
            <person name="Araujo R."/>
            <person name="Bowman C.L."/>
            <person name="Brooks S.Y."/>
            <person name="Buehler E."/>
            <person name="Chan A."/>
            <person name="Chao Q."/>
            <person name="Chen H."/>
            <person name="Cheuk R.F."/>
            <person name="Chin C.W."/>
            <person name="Chung M.K."/>
            <person name="Conn L."/>
            <person name="Conway A.B."/>
            <person name="Conway A.R."/>
            <person name="Creasy T.H."/>
            <person name="Dewar K."/>
            <person name="Dunn P."/>
            <person name="Etgu P."/>
            <person name="Feldblyum T.V."/>
            <person name="Feng J.-D."/>
            <person name="Fong B."/>
            <person name="Fujii C.Y."/>
            <person name="Gill J.E."/>
            <person name="Goldsmith A.D."/>
            <person name="Haas B."/>
            <person name="Hansen N.F."/>
            <person name="Hughes B."/>
            <person name="Huizar L."/>
            <person name="Hunter J.L."/>
            <person name="Jenkins J."/>
            <person name="Johnson-Hopson C."/>
            <person name="Khan S."/>
            <person name="Khaykin E."/>
            <person name="Kim C.J."/>
            <person name="Koo H.L."/>
            <person name="Kremenetskaia I."/>
            <person name="Kurtz D.B."/>
            <person name="Kwan A."/>
            <person name="Lam B."/>
            <person name="Langin-Hooper S."/>
            <person name="Lee A."/>
            <person name="Lee J.M."/>
            <person name="Lenz C.A."/>
            <person name="Li J.H."/>
            <person name="Li Y.-P."/>
            <person name="Lin X."/>
            <person name="Liu S.X."/>
            <person name="Liu Z.A."/>
            <person name="Luros J.S."/>
            <person name="Maiti R."/>
            <person name="Marziali A."/>
            <person name="Militscher J."/>
            <person name="Miranda M."/>
            <person name="Nguyen M."/>
            <person name="Nierman W.C."/>
            <person name="Osborne B.I."/>
            <person name="Pai G."/>
            <person name="Peterson J."/>
            <person name="Pham P.K."/>
            <person name="Rizzo M."/>
            <person name="Rooney T."/>
            <person name="Rowley D."/>
            <person name="Sakano H."/>
            <person name="Salzberg S.L."/>
            <person name="Schwartz J.R."/>
            <person name="Shinn P."/>
            <person name="Southwick A.M."/>
            <person name="Sun H."/>
            <person name="Tallon L.J."/>
            <person name="Tambunga G."/>
            <person name="Toriumi M.J."/>
            <person name="Town C.D."/>
            <person name="Utterback T."/>
            <person name="Van Aken S."/>
            <person name="Vaysberg M."/>
            <person name="Vysotskaia V.S."/>
            <person name="Walker M."/>
            <person name="Wu D."/>
            <person name="Yu G."/>
            <person name="Fraser C.M."/>
            <person name="Venter J.C."/>
            <person name="Davis R.W."/>
        </authorList>
    </citation>
    <scope>NUCLEOTIDE SEQUENCE [LARGE SCALE GENOMIC DNA]</scope>
    <source>
        <strain>cv. Columbia</strain>
    </source>
</reference>
<reference key="2">
    <citation type="journal article" date="2017" name="Plant J.">
        <title>Araport11: a complete reannotation of the Arabidopsis thaliana reference genome.</title>
        <authorList>
            <person name="Cheng C.Y."/>
            <person name="Krishnakumar V."/>
            <person name="Chan A.P."/>
            <person name="Thibaud-Nissen F."/>
            <person name="Schobel S."/>
            <person name="Town C.D."/>
        </authorList>
    </citation>
    <scope>GENOME REANNOTATION</scope>
    <source>
        <strain>cv. Columbia</strain>
    </source>
</reference>
<reference key="3">
    <citation type="journal article" date="2006" name="Plant Biotechnol. J.">
        <title>Simultaneous high-throughput recombinational cloning of open reading frames in closed and open configurations.</title>
        <authorList>
            <person name="Underwood B.A."/>
            <person name="Vanderhaeghen R."/>
            <person name="Whitford R."/>
            <person name="Town C.D."/>
            <person name="Hilson P."/>
        </authorList>
    </citation>
    <scope>NUCLEOTIDE SEQUENCE [LARGE SCALE MRNA] (ISOFORMS 2 AND 4)</scope>
    <source>
        <strain>cv. Columbia</strain>
    </source>
</reference>
<reference key="4">
    <citation type="submission" date="2006-07" db="EMBL/GenBank/DDBJ databases">
        <title>Large-scale analysis of RIKEN Arabidopsis full-length (RAFL) cDNAs.</title>
        <authorList>
            <person name="Totoki Y."/>
            <person name="Seki M."/>
            <person name="Ishida J."/>
            <person name="Nakajima M."/>
            <person name="Enju A."/>
            <person name="Kamiya A."/>
            <person name="Narusaka M."/>
            <person name="Shin-i T."/>
            <person name="Nakagawa M."/>
            <person name="Sakamoto N."/>
            <person name="Oishi K."/>
            <person name="Kohara Y."/>
            <person name="Kobayashi M."/>
            <person name="Toyoda A."/>
            <person name="Sakaki Y."/>
            <person name="Sakurai T."/>
            <person name="Iida K."/>
            <person name="Akiyama K."/>
            <person name="Satou M."/>
            <person name="Toyoda T."/>
            <person name="Konagaya A."/>
            <person name="Carninci P."/>
            <person name="Kawai J."/>
            <person name="Hayashizaki Y."/>
            <person name="Shinozaki K."/>
        </authorList>
    </citation>
    <scope>NUCLEOTIDE SEQUENCE [LARGE SCALE MRNA] (ISOFORM 3)</scope>
    <source>
        <strain>cv. Columbia</strain>
    </source>
</reference>
<reference key="5">
    <citation type="journal article" date="2009" name="Plant Cell">
        <title>Mutations of an alpha1,6 mannosyltransferase inhibit endoplasmic reticulum-associated degradation of defective brassinosteroid receptors in Arabidopsis.</title>
        <authorList>
            <person name="Hong Z."/>
            <person name="Jin H."/>
            <person name="Fitchette A.C."/>
            <person name="Xia Y."/>
            <person name="Monk A.M."/>
            <person name="Faye L."/>
            <person name="Li J."/>
        </authorList>
    </citation>
    <scope>NUCLEOTIDE SEQUENCE [GENOMIC DNA]</scope>
    <scope>FUNCTION</scope>
    <scope>CATALYTIC ACTIVITY</scope>
    <scope>PATHWAY</scope>
    <scope>SUBCELLULAR LOCATION</scope>
    <scope>MUTAGENESIS OF GLU-38 AND SER-307</scope>
</reference>
<accession>A8MR93</accession>
<accession>F4HVW9</accession>
<accession>F4HVX0</accession>
<accession>Q0WT37</accession>
<accession>Q1G329</accession>
<accession>Q1G330</accession>
<gene>
    <name type="primary">ALG12</name>
    <name type="synonym">EBS4</name>
    <name type="ordered locus">At1g02145</name>
    <name type="ORF">T6A9</name>
</gene>
<evidence type="ECO:0000255" key="1"/>
<evidence type="ECO:0000269" key="2">
    <source>
    </source>
</evidence>
<evidence type="ECO:0000303" key="3">
    <source>
    </source>
</evidence>
<evidence type="ECO:0000303" key="4">
    <source ref="4"/>
</evidence>
<evidence type="ECO:0000305" key="5"/>
<evidence type="ECO:0000305" key="6">
    <source>
    </source>
</evidence>
<protein>
    <recommendedName>
        <fullName evidence="6">Dol-P-Man:Man(7)GlcNAc(2)-PP-Dol alpha-1,6-mannosyltransferase</fullName>
        <ecNumber evidence="2">2.4.1.260</ecNumber>
    </recommendedName>
    <alternativeName>
        <fullName>Alpha-1,6-mannosyltransferase ALG12</fullName>
    </alternativeName>
    <alternativeName>
        <fullName>Asparagine-linked glycosylation protein 12</fullName>
    </alternativeName>
    <alternativeName>
        <fullName>EMS-mutagenized BRI1 suppressor 4</fullName>
    </alternativeName>
</protein>
<dbReference type="EC" id="2.4.1.260" evidence="2"/>
<dbReference type="EMBL" id="AC064879">
    <property type="status" value="NOT_ANNOTATED_CDS"/>
    <property type="molecule type" value="Genomic_DNA"/>
</dbReference>
<dbReference type="EMBL" id="CP002684">
    <property type="protein sequence ID" value="AEE27389.1"/>
    <property type="molecule type" value="Genomic_DNA"/>
</dbReference>
<dbReference type="EMBL" id="CP002684">
    <property type="protein sequence ID" value="AEE27390.1"/>
    <property type="molecule type" value="Genomic_DNA"/>
</dbReference>
<dbReference type="EMBL" id="CP002684">
    <property type="protein sequence ID" value="AEE27391.1"/>
    <property type="molecule type" value="Genomic_DNA"/>
</dbReference>
<dbReference type="EMBL" id="CP002684">
    <property type="protein sequence ID" value="AEE27392.1"/>
    <property type="molecule type" value="Genomic_DNA"/>
</dbReference>
<dbReference type="EMBL" id="DQ492198">
    <property type="protein sequence ID" value="ABF59127.1"/>
    <property type="molecule type" value="mRNA"/>
</dbReference>
<dbReference type="EMBL" id="DQ492199">
    <property type="protein sequence ID" value="ABF59128.1"/>
    <property type="molecule type" value="mRNA"/>
</dbReference>
<dbReference type="EMBL" id="AK227725">
    <property type="protein sequence ID" value="BAE99711.1"/>
    <property type="molecule type" value="mRNA"/>
</dbReference>
<dbReference type="RefSeq" id="NP_001077446.1">
    <molecule id="A8MR93-5"/>
    <property type="nucleotide sequence ID" value="NM_001083977.4"/>
</dbReference>
<dbReference type="RefSeq" id="NP_001077447.2">
    <molecule id="A8MR93-2"/>
    <property type="nucleotide sequence ID" value="NM_001083978.2"/>
</dbReference>
<dbReference type="RefSeq" id="NP_001077448.1">
    <molecule id="A8MR93-1"/>
    <property type="nucleotide sequence ID" value="NM_001083979.2"/>
</dbReference>
<dbReference type="RefSeq" id="NP_001117214.1">
    <molecule id="A8MR93-6"/>
    <property type="nucleotide sequence ID" value="NM_001123742.1"/>
</dbReference>
<dbReference type="FunCoup" id="A8MR93">
    <property type="interactions" value="4090"/>
</dbReference>
<dbReference type="STRING" id="3702.A8MR93"/>
<dbReference type="CAZy" id="GT22">
    <property type="family name" value="Glycosyltransferase Family 22"/>
</dbReference>
<dbReference type="GlyCosmos" id="A8MR93">
    <property type="glycosylation" value="2 sites, No reported glycans"/>
</dbReference>
<dbReference type="GlyGen" id="A8MR93">
    <property type="glycosylation" value="2 sites"/>
</dbReference>
<dbReference type="PaxDb" id="3702-AT1G02145.3"/>
<dbReference type="ProteomicsDB" id="244895">
    <molecule id="A8MR93-1"/>
</dbReference>
<dbReference type="EnsemblPlants" id="AT1G02145.1">
    <molecule id="A8MR93-5"/>
    <property type="protein sequence ID" value="AT1G02145.1"/>
    <property type="gene ID" value="AT1G02145"/>
</dbReference>
<dbReference type="EnsemblPlants" id="AT1G02145.2">
    <molecule id="A8MR93-2"/>
    <property type="protein sequence ID" value="AT1G02145.2"/>
    <property type="gene ID" value="AT1G02145"/>
</dbReference>
<dbReference type="EnsemblPlants" id="AT1G02145.3">
    <molecule id="A8MR93-1"/>
    <property type="protein sequence ID" value="AT1G02145.3"/>
    <property type="gene ID" value="AT1G02145"/>
</dbReference>
<dbReference type="EnsemblPlants" id="AT1G02145.4">
    <molecule id="A8MR93-6"/>
    <property type="protein sequence ID" value="AT1G02145.4"/>
    <property type="gene ID" value="AT1G02145"/>
</dbReference>
<dbReference type="GeneID" id="5007658"/>
<dbReference type="Gramene" id="AT1G02145.1">
    <molecule id="A8MR93-5"/>
    <property type="protein sequence ID" value="AT1G02145.1"/>
    <property type="gene ID" value="AT1G02145"/>
</dbReference>
<dbReference type="Gramene" id="AT1G02145.2">
    <molecule id="A8MR93-2"/>
    <property type="protein sequence ID" value="AT1G02145.2"/>
    <property type="gene ID" value="AT1G02145"/>
</dbReference>
<dbReference type="Gramene" id="AT1G02145.3">
    <molecule id="A8MR93-1"/>
    <property type="protein sequence ID" value="AT1G02145.3"/>
    <property type="gene ID" value="AT1G02145"/>
</dbReference>
<dbReference type="Gramene" id="AT1G02145.4">
    <molecule id="A8MR93-6"/>
    <property type="protein sequence ID" value="AT1G02145.4"/>
    <property type="gene ID" value="AT1G02145"/>
</dbReference>
<dbReference type="KEGG" id="ath:AT1G02145"/>
<dbReference type="Araport" id="AT1G02145"/>
<dbReference type="TAIR" id="AT1G02145">
    <property type="gene designation" value="ALG12"/>
</dbReference>
<dbReference type="eggNOG" id="KOG2516">
    <property type="taxonomic scope" value="Eukaryota"/>
</dbReference>
<dbReference type="HOGENOM" id="CLU_008917_0_0_1"/>
<dbReference type="InParanoid" id="A8MR93"/>
<dbReference type="OMA" id="WWVEVRM"/>
<dbReference type="PhylomeDB" id="A8MR93"/>
<dbReference type="BRENDA" id="2.4.1.260">
    <property type="organism ID" value="399"/>
</dbReference>
<dbReference type="UniPathway" id="UPA00378"/>
<dbReference type="PRO" id="PR:A8MR93"/>
<dbReference type="Proteomes" id="UP000006548">
    <property type="component" value="Chromosome 1"/>
</dbReference>
<dbReference type="ExpressionAtlas" id="A8MR93">
    <property type="expression patterns" value="baseline and differential"/>
</dbReference>
<dbReference type="GO" id="GO:0005789">
    <property type="term" value="C:endoplasmic reticulum membrane"/>
    <property type="evidence" value="ECO:0007669"/>
    <property type="project" value="UniProtKB-SubCell"/>
</dbReference>
<dbReference type="GO" id="GO:0052917">
    <property type="term" value="F:dolichyl-P-Man:Man(7)GlcNAc(2)-PP-dolichol alpha-1,6-mannosyltransferase"/>
    <property type="evidence" value="ECO:0007669"/>
    <property type="project" value="UniProtKB-EC"/>
</dbReference>
<dbReference type="GO" id="GO:0006487">
    <property type="term" value="P:protein N-linked glycosylation"/>
    <property type="evidence" value="ECO:0000315"/>
    <property type="project" value="TAIR"/>
</dbReference>
<dbReference type="InterPro" id="IPR005599">
    <property type="entry name" value="GPI_mannosylTrfase"/>
</dbReference>
<dbReference type="PANTHER" id="PTHR22760:SF1">
    <property type="entry name" value="DOL-P-MAN:MAN(7)GLCNAC(2)-PP-DOL ALPHA-1,6-MANNOSYLTRANSFERASE"/>
    <property type="match status" value="1"/>
</dbReference>
<dbReference type="PANTHER" id="PTHR22760">
    <property type="entry name" value="GLYCOSYLTRANSFERASE"/>
    <property type="match status" value="1"/>
</dbReference>
<dbReference type="Pfam" id="PF03901">
    <property type="entry name" value="Glyco_transf_22"/>
    <property type="match status" value="1"/>
</dbReference>
<sequence>MPTDSKMAKFLQSYGYDLILGSVAAIYVVMAPYTKVEESFNVQSMHDILYHRHHLDSYDHLEFPGVVPRTFIGAFIVSVFASPVVSIISCLGFPKVYSLVAARLVLGCIILSTLRFFRIQIKKKFGNQVETFFVLFTSLQFHFLFYCTRPLPNILALGLVNLAYGNWLKGNFYPALSFLIFATVIFRCDTMLLLGPIGLELLLTKSISFWKALKYCVGTALLAVGLTIFVDSIMWKKFVWPEFEVFWFNSILNRSSDWGTHSIHWYFTSALPRSLLVAYPLSLLGTLVDRRVPFFIVPVLSFVILYSKLPHKELRFIISSVPMFNLSAAVAASRIYNNRKKTIWKLVNMVMLAFFAISAGCTVVTFMASYYNYPSGYALKRLHQIGHPANVAGEEWVHIDTFGAMNGISRFCEDDFPWRYSKEEEIVVEELRNRNFTYLVNEHSSVDGYKCLFYEEGFERLELRRGFPPIVLVKKAKVYLHREMKKEDPFHKKWPGC</sequence>
<name>ALG12_ARATH</name>
<keyword id="KW-0025">Alternative splicing</keyword>
<keyword id="KW-0256">Endoplasmic reticulum</keyword>
<keyword id="KW-0325">Glycoprotein</keyword>
<keyword id="KW-0328">Glycosyltransferase</keyword>
<keyword id="KW-0472">Membrane</keyword>
<keyword id="KW-1185">Reference proteome</keyword>
<keyword id="KW-0808">Transferase</keyword>
<keyword id="KW-0812">Transmembrane</keyword>
<keyword id="KW-1133">Transmembrane helix</keyword>